<comment type="function">
    <text evidence="3">Sulfotransferase that utilizes 3'-phospho-5'-adenylyl sulfate (PAPS) as sulfonate donor to catalyze the sulfate conjugation of a wide variety of acceptor molecules bearing a hydroxyl or an amine group. Sulfonation increases the water solubility of most compounds, and therefore their renal excretion, but it can also result in bioactivation to form active metabolites. Displays broad substrate specificity for small phenolic compounds. Plays an important role in the sulfonation of endogenous molecules such as steroid hormones (By similarity). Mediates also the metabolic activation of carcinogenic N-hydroxyarylamines leading to highly reactive intermediates capable of forming DNA adducts, potentially resulting in mutagenesis (By similarity). May play a role in gut microbiota-host metabolic interaction. O-sulfonates 4-ethylphenol (4-EP), a dietary tyrosine-derived metabolite produced by gut bacteria. The product 4-EPS crosses the blood-brain barrier and may negatively regulate oligodendrocyte maturation and myelination, affecting the functional connectivity of different brain regions associated with the limbic system. Catalyzes the sulfate conjugation of dopamine. Catalyzes the sulfation of T4 (L-thyroxine/3,5,3',5'-tetraiodothyronine), T3 (3,5,3'-triiodothyronine), rT3 (3,3',5'-triiodothyronine) and 3,3'-T2 (3,3'-diiodothyronine), with a substrate preference of 3,3'-T2 &gt; rT3 &gt; T3 &gt; T4 (By similarity).</text>
</comment>
<comment type="catalytic activity">
    <reaction evidence="3">
        <text>a phenol + 3'-phosphoadenylyl sulfate = an aryl sulfate + adenosine 3',5'-bisphosphate + H(+)</text>
        <dbReference type="Rhea" id="RHEA:12164"/>
        <dbReference type="ChEBI" id="CHEBI:15378"/>
        <dbReference type="ChEBI" id="CHEBI:33853"/>
        <dbReference type="ChEBI" id="CHEBI:58339"/>
        <dbReference type="ChEBI" id="CHEBI:58343"/>
        <dbReference type="ChEBI" id="CHEBI:140317"/>
        <dbReference type="EC" id="2.8.2.1"/>
    </reaction>
    <physiologicalReaction direction="left-to-right" evidence="3">
        <dbReference type="Rhea" id="RHEA:12165"/>
    </physiologicalReaction>
</comment>
<comment type="catalytic activity">
    <reaction evidence="3">
        <text>17beta-estradiol + 3'-phosphoadenylyl sulfate = 17beta-estradiol 3-sulfate + adenosine 3',5'-bisphosphate + H(+)</text>
        <dbReference type="Rhea" id="RHEA:52372"/>
        <dbReference type="ChEBI" id="CHEBI:15378"/>
        <dbReference type="ChEBI" id="CHEBI:16469"/>
        <dbReference type="ChEBI" id="CHEBI:58339"/>
        <dbReference type="ChEBI" id="CHEBI:58343"/>
        <dbReference type="ChEBI" id="CHEBI:136582"/>
    </reaction>
    <physiologicalReaction direction="left-to-right" evidence="3">
        <dbReference type="Rhea" id="RHEA:52373"/>
    </physiologicalReaction>
</comment>
<comment type="catalytic activity">
    <reaction evidence="3">
        <text>4-ethylphenol + 3'-phosphoadenylyl sulfate = 4-ethylphenyl sulfate + adenosine 3',5'-bisphosphate + H(+)</text>
        <dbReference type="Rhea" id="RHEA:70607"/>
        <dbReference type="ChEBI" id="CHEBI:15378"/>
        <dbReference type="ChEBI" id="CHEBI:49584"/>
        <dbReference type="ChEBI" id="CHEBI:58339"/>
        <dbReference type="ChEBI" id="CHEBI:58343"/>
        <dbReference type="ChEBI" id="CHEBI:133681"/>
    </reaction>
    <physiologicalReaction direction="left-to-right" evidence="3">
        <dbReference type="Rhea" id="RHEA:70608"/>
    </physiologicalReaction>
</comment>
<comment type="catalytic activity">
    <reaction evidence="3">
        <text>4-nitrophenol + 3'-phosphoadenylyl sulfate = 4-nitrophenyl sulfate + adenosine 3',5'-bisphosphate</text>
        <dbReference type="Rhea" id="RHEA:66548"/>
        <dbReference type="ChEBI" id="CHEBI:57917"/>
        <dbReference type="ChEBI" id="CHEBI:58339"/>
        <dbReference type="ChEBI" id="CHEBI:58343"/>
        <dbReference type="ChEBI" id="CHEBI:140994"/>
    </reaction>
    <physiologicalReaction direction="left-to-right" evidence="3">
        <dbReference type="Rhea" id="RHEA:66549"/>
    </physiologicalReaction>
</comment>
<comment type="catalytic activity">
    <reaction evidence="3">
        <text>dopamine + 3'-phosphoadenylyl sulfate = dopamine 3-O-sulfate + adenosine 3',5'-bisphosphate + H(+)</text>
        <dbReference type="Rhea" id="RHEA:67880"/>
        <dbReference type="ChEBI" id="CHEBI:15378"/>
        <dbReference type="ChEBI" id="CHEBI:58339"/>
        <dbReference type="ChEBI" id="CHEBI:58343"/>
        <dbReference type="ChEBI" id="CHEBI:59905"/>
        <dbReference type="ChEBI" id="CHEBI:133524"/>
    </reaction>
    <physiologicalReaction direction="left-to-right" evidence="3">
        <dbReference type="Rhea" id="RHEA:67881"/>
    </physiologicalReaction>
</comment>
<comment type="catalytic activity">
    <reaction evidence="3">
        <text>dopamine + 3'-phosphoadenylyl sulfate = dopamine 4-O-sulfate + adenosine 3',5'-bisphosphate + H(+)</text>
        <dbReference type="Rhea" id="RHEA:67884"/>
        <dbReference type="ChEBI" id="CHEBI:15378"/>
        <dbReference type="ChEBI" id="CHEBI:58339"/>
        <dbReference type="ChEBI" id="CHEBI:58343"/>
        <dbReference type="ChEBI" id="CHEBI:59905"/>
        <dbReference type="ChEBI" id="CHEBI:133529"/>
    </reaction>
    <physiologicalReaction direction="left-to-right" evidence="3">
        <dbReference type="Rhea" id="RHEA:67885"/>
    </physiologicalReaction>
</comment>
<comment type="catalytic activity">
    <reaction evidence="3">
        <text>3,3',5-triiodo-L-thyronine + 3'-phosphoadenylyl sulfate = 3,3',5-triiodo-L-thyronine sulfate + adenosine 3',5'-bisphosphate + H(+)</text>
        <dbReference type="Rhea" id="RHEA:67876"/>
        <dbReference type="ChEBI" id="CHEBI:15378"/>
        <dbReference type="ChEBI" id="CHEBI:58339"/>
        <dbReference type="ChEBI" id="CHEBI:58343"/>
        <dbReference type="ChEBI" id="CHEBI:176511"/>
        <dbReference type="ChEBI" id="CHEBI:533015"/>
    </reaction>
    <physiologicalReaction direction="left-to-right" evidence="3">
        <dbReference type="Rhea" id="RHEA:67877"/>
    </physiologicalReaction>
</comment>
<comment type="catalytic activity">
    <reaction evidence="3">
        <text>3,3',5'-triiodo-L-thyronine + 3'-phosphoadenylyl sulfate = 3,3',5'-triiodo-L-thyronine sulfate + adenosine 3',5'-bisphosphate + H(+)</text>
        <dbReference type="Rhea" id="RHEA:67888"/>
        <dbReference type="ChEBI" id="CHEBI:15378"/>
        <dbReference type="ChEBI" id="CHEBI:57261"/>
        <dbReference type="ChEBI" id="CHEBI:58339"/>
        <dbReference type="ChEBI" id="CHEBI:58343"/>
        <dbReference type="ChEBI" id="CHEBI:176513"/>
    </reaction>
    <physiologicalReaction direction="left-to-right" evidence="3">
        <dbReference type="Rhea" id="RHEA:67889"/>
    </physiologicalReaction>
</comment>
<comment type="catalytic activity">
    <reaction evidence="3">
        <text>3,3'-diiodo-L-thyronine + 3'-phosphoadenylyl sulfate = 3,3'-diiodo-L-thyronine sulfate + adenosine 3',5'-bisphosphate + H(+)</text>
        <dbReference type="Rhea" id="RHEA:67892"/>
        <dbReference type="ChEBI" id="CHEBI:15378"/>
        <dbReference type="ChEBI" id="CHEBI:58339"/>
        <dbReference type="ChEBI" id="CHEBI:58343"/>
        <dbReference type="ChEBI" id="CHEBI:176514"/>
        <dbReference type="ChEBI" id="CHEBI:176515"/>
    </reaction>
    <physiologicalReaction direction="left-to-right" evidence="3">
        <dbReference type="Rhea" id="RHEA:67893"/>
    </physiologicalReaction>
</comment>
<comment type="catalytic activity">
    <reaction evidence="3">
        <text>L-thyroxine + 3'-phosphoadenylyl sulfate = L-thyroxine sulfate + adenosine 3',5'-bisphosphate + H(+)</text>
        <dbReference type="Rhea" id="RHEA:83575"/>
        <dbReference type="ChEBI" id="CHEBI:15378"/>
        <dbReference type="ChEBI" id="CHEBI:58339"/>
        <dbReference type="ChEBI" id="CHEBI:58343"/>
        <dbReference type="ChEBI" id="CHEBI:58448"/>
        <dbReference type="ChEBI" id="CHEBI:176512"/>
    </reaction>
    <physiologicalReaction direction="left-to-right" evidence="3">
        <dbReference type="Rhea" id="RHEA:83576"/>
    </physiologicalReaction>
</comment>
<comment type="subunit">
    <text evidence="3">Homodimer.</text>
</comment>
<comment type="subcellular location">
    <subcellularLocation>
        <location evidence="2">Cytoplasm</location>
    </subcellularLocation>
</comment>
<comment type="tissue specificity">
    <text evidence="4">Distal lung parenchyma.</text>
</comment>
<comment type="similarity">
    <text evidence="6">Belongs to the sulfotransferase 1 family.</text>
</comment>
<protein>
    <recommendedName>
        <fullName>Sulfotransferase 1A1</fullName>
        <shortName>ST1A1</shortName>
        <ecNumber evidence="3">2.8.2.1</ecNumber>
    </recommendedName>
    <alternativeName>
        <fullName>Aryl sulfotransferase</fullName>
    </alternativeName>
    <alternativeName>
        <fullName evidence="5">Phenol sulfotransferase</fullName>
    </alternativeName>
    <alternativeName>
        <fullName>Phenol-sulfating phenol sulfotransferase</fullName>
        <shortName>P-PST</shortName>
    </alternativeName>
</protein>
<organism>
    <name type="scientific">Bos taurus</name>
    <name type="common">Bovine</name>
    <dbReference type="NCBI Taxonomy" id="9913"/>
    <lineage>
        <taxon>Eukaryota</taxon>
        <taxon>Metazoa</taxon>
        <taxon>Chordata</taxon>
        <taxon>Craniata</taxon>
        <taxon>Vertebrata</taxon>
        <taxon>Euteleostomi</taxon>
        <taxon>Mammalia</taxon>
        <taxon>Eutheria</taxon>
        <taxon>Laurasiatheria</taxon>
        <taxon>Artiodactyla</taxon>
        <taxon>Ruminantia</taxon>
        <taxon>Pecora</taxon>
        <taxon>Bovidae</taxon>
        <taxon>Bovinae</taxon>
        <taxon>Bos</taxon>
    </lineage>
</organism>
<evidence type="ECO:0000250" key="1">
    <source>
        <dbReference type="UniProtKB" id="P0DMM9"/>
    </source>
</evidence>
<evidence type="ECO:0000250" key="2">
    <source>
        <dbReference type="UniProtKB" id="P17988"/>
    </source>
</evidence>
<evidence type="ECO:0000250" key="3">
    <source>
        <dbReference type="UniProtKB" id="P50225"/>
    </source>
</evidence>
<evidence type="ECO:0000269" key="4">
    <source>
    </source>
</evidence>
<evidence type="ECO:0000303" key="5">
    <source>
    </source>
</evidence>
<evidence type="ECO:0000305" key="6"/>
<proteinExistence type="evidence at protein level"/>
<name>ST1A1_BOVIN</name>
<accession>P50227</accession>
<accession>Q3T0S9</accession>
<sequence>MELIQDTSRPPAKYVKGIPLIKYFAEALGPLESFEAWPDDLLISTYPKSGTTWVSEILDLIYQEGDLEKCQRAPVFLRVPFLEFSAPGVPTGVELLKDTPAPRLLKTHLPLALLPKTLLDQKVKVIYIARNAKDVAVSYYHFYRMAKVHPDPGTWDSFLEKFMAGEVCYGSWYQHVQEWWELSHTHPVLYLFYEDIKEDPKREIQKILEFIGRSLPEETVDHIVQRTSFKEMKKNPMTNYSTIPTAVMDHSISAFMRKGITGDWKSTFTVAQNELFEAHYAKKMAGCKLRFRWEL</sequence>
<keyword id="KW-0128">Catecholamine metabolism</keyword>
<keyword id="KW-0963">Cytoplasm</keyword>
<keyword id="KW-0903">Direct protein sequencing</keyword>
<keyword id="KW-0443">Lipid metabolism</keyword>
<keyword id="KW-0597">Phosphoprotein</keyword>
<keyword id="KW-1185">Reference proteome</keyword>
<keyword id="KW-0753">Steroid metabolism</keyword>
<keyword id="KW-0808">Transferase</keyword>
<dbReference type="EC" id="2.8.2.1" evidence="3"/>
<dbReference type="EMBL" id="U35253">
    <property type="protein sequence ID" value="AAA85510.1"/>
    <property type="molecule type" value="mRNA"/>
</dbReference>
<dbReference type="EMBL" id="U34753">
    <property type="protein sequence ID" value="AAC48677.1"/>
    <property type="molecule type" value="Genomic_DNA"/>
</dbReference>
<dbReference type="EMBL" id="BC102274">
    <property type="protein sequence ID" value="AAI02275.1"/>
    <property type="molecule type" value="mRNA"/>
</dbReference>
<dbReference type="EMBL" id="L33828">
    <property type="protein sequence ID" value="AAA56789.1"/>
    <property type="molecule type" value="Genomic_DNA"/>
</dbReference>
<dbReference type="PIR" id="JC5000">
    <property type="entry name" value="JC5000"/>
</dbReference>
<dbReference type="RefSeq" id="NP_001421834.1">
    <property type="nucleotide sequence ID" value="NM_001434905.1"/>
</dbReference>
<dbReference type="RefSeq" id="NP_001421837.1">
    <property type="nucleotide sequence ID" value="NM_001434908.1"/>
</dbReference>
<dbReference type="RefSeq" id="NP_803487.2">
    <property type="nucleotide sequence ID" value="NM_177521.3"/>
</dbReference>
<dbReference type="RefSeq" id="XP_005224892.1">
    <property type="nucleotide sequence ID" value="XM_005224835.3"/>
</dbReference>
<dbReference type="RefSeq" id="XP_005224893.1">
    <property type="nucleotide sequence ID" value="XM_005224836.3"/>
</dbReference>
<dbReference type="RefSeq" id="XP_005224894.1">
    <property type="nucleotide sequence ID" value="XM_005224837.3"/>
</dbReference>
<dbReference type="RefSeq" id="XP_005224895.1">
    <property type="nucleotide sequence ID" value="XM_005224838.3"/>
</dbReference>
<dbReference type="RefSeq" id="XP_010817689.1">
    <property type="nucleotide sequence ID" value="XM_010819387.2"/>
</dbReference>
<dbReference type="RefSeq" id="XP_010817690.1">
    <property type="nucleotide sequence ID" value="XM_010819388.2"/>
</dbReference>
<dbReference type="RefSeq" id="XP_010817691.1">
    <property type="nucleotide sequence ID" value="XM_010819389.4"/>
</dbReference>
<dbReference type="RefSeq" id="XP_024840432.1">
    <property type="nucleotide sequence ID" value="XM_024984664.2"/>
</dbReference>
<dbReference type="RefSeq" id="XP_024840433.1">
    <property type="nucleotide sequence ID" value="XM_024984665.2"/>
</dbReference>
<dbReference type="RefSeq" id="XP_024840434.1">
    <property type="nucleotide sequence ID" value="XM_024984666.2"/>
</dbReference>
<dbReference type="SMR" id="P50227"/>
<dbReference type="FunCoup" id="P50227">
    <property type="interactions" value="62"/>
</dbReference>
<dbReference type="STRING" id="9913.ENSBTAP00000011388"/>
<dbReference type="PaxDb" id="9913-ENSBTAP00000011388"/>
<dbReference type="PeptideAtlas" id="P50227"/>
<dbReference type="Ensembl" id="ENSBTAT00000011388.4">
    <property type="protein sequence ID" value="ENSBTAP00000011388.2"/>
    <property type="gene ID" value="ENSBTAG00000008635.5"/>
</dbReference>
<dbReference type="GeneID" id="282485"/>
<dbReference type="KEGG" id="bta:282485"/>
<dbReference type="CTD" id="6817"/>
<dbReference type="VEuPathDB" id="HostDB:ENSBTAG00000008635"/>
<dbReference type="eggNOG" id="KOG1584">
    <property type="taxonomic scope" value="Eukaryota"/>
</dbReference>
<dbReference type="GeneTree" id="ENSGT00940000162765"/>
<dbReference type="HOGENOM" id="CLU_027239_1_2_1"/>
<dbReference type="InParanoid" id="P50227"/>
<dbReference type="OMA" id="ELFEAHY"/>
<dbReference type="OrthoDB" id="205623at2759"/>
<dbReference type="TreeFam" id="TF321745"/>
<dbReference type="BRENDA" id="2.8.2.1">
    <property type="organism ID" value="908"/>
</dbReference>
<dbReference type="Reactome" id="R-BTA-156584">
    <property type="pathway name" value="Cytosolic sulfonation of small molecules"/>
</dbReference>
<dbReference type="Reactome" id="R-BTA-9753281">
    <property type="pathway name" value="Paracetamol ADME"/>
</dbReference>
<dbReference type="Proteomes" id="UP000009136">
    <property type="component" value="Chromosome 25"/>
</dbReference>
<dbReference type="Bgee" id="ENSBTAG00000008635">
    <property type="expression patterns" value="Expressed in omental fat pad and 103 other cell types or tissues"/>
</dbReference>
<dbReference type="GO" id="GO:0005737">
    <property type="term" value="C:cytoplasm"/>
    <property type="evidence" value="ECO:0000318"/>
    <property type="project" value="GO_Central"/>
</dbReference>
<dbReference type="GO" id="GO:0005829">
    <property type="term" value="C:cytosol"/>
    <property type="evidence" value="ECO:0000250"/>
    <property type="project" value="UniProtKB"/>
</dbReference>
<dbReference type="GO" id="GO:0050656">
    <property type="term" value="F:3'-phosphoadenosine 5'-phosphosulfate binding"/>
    <property type="evidence" value="ECO:0000250"/>
    <property type="project" value="UniProtKB"/>
</dbReference>
<dbReference type="GO" id="GO:0004062">
    <property type="term" value="F:aryl sulfotransferase activity"/>
    <property type="evidence" value="ECO:0000250"/>
    <property type="project" value="UniProtKB"/>
</dbReference>
<dbReference type="GO" id="GO:0008146">
    <property type="term" value="F:sulfotransferase activity"/>
    <property type="evidence" value="ECO:0000250"/>
    <property type="project" value="UniProtKB"/>
</dbReference>
<dbReference type="GO" id="GO:0042420">
    <property type="term" value="P:dopamine catabolic process"/>
    <property type="evidence" value="ECO:0000250"/>
    <property type="project" value="UniProtKB"/>
</dbReference>
<dbReference type="GO" id="GO:0008202">
    <property type="term" value="P:steroid metabolic process"/>
    <property type="evidence" value="ECO:0007669"/>
    <property type="project" value="UniProtKB-KW"/>
</dbReference>
<dbReference type="GO" id="GO:0051923">
    <property type="term" value="P:sulfation"/>
    <property type="evidence" value="ECO:0000318"/>
    <property type="project" value="GO_Central"/>
</dbReference>
<dbReference type="GO" id="GO:0042403">
    <property type="term" value="P:thyroid hormone metabolic process"/>
    <property type="evidence" value="ECO:0000250"/>
    <property type="project" value="UniProtKB"/>
</dbReference>
<dbReference type="FunFam" id="3.40.50.300:FF:000433">
    <property type="entry name" value="Estrogen sulfotransferase"/>
    <property type="match status" value="1"/>
</dbReference>
<dbReference type="Gene3D" id="3.40.50.300">
    <property type="entry name" value="P-loop containing nucleotide triphosphate hydrolases"/>
    <property type="match status" value="1"/>
</dbReference>
<dbReference type="InterPro" id="IPR027417">
    <property type="entry name" value="P-loop_NTPase"/>
</dbReference>
<dbReference type="InterPro" id="IPR000863">
    <property type="entry name" value="Sulfotransferase_dom"/>
</dbReference>
<dbReference type="PANTHER" id="PTHR11783">
    <property type="entry name" value="SULFOTRANSFERASE SULT"/>
    <property type="match status" value="1"/>
</dbReference>
<dbReference type="Pfam" id="PF00685">
    <property type="entry name" value="Sulfotransfer_1"/>
    <property type="match status" value="1"/>
</dbReference>
<dbReference type="SUPFAM" id="SSF52540">
    <property type="entry name" value="P-loop containing nucleoside triphosphate hydrolases"/>
    <property type="match status" value="1"/>
</dbReference>
<gene>
    <name type="primary">SULT1A1</name>
    <name type="synonym">STP</name>
</gene>
<reference key="1">
    <citation type="journal article" date="1995" name="Biochem. J.">
        <title>Characterization of bovine tracheobronchial phenol sulphotransferase cDNA and detection of mRNA regulation by cortisol.</title>
        <authorList>
            <person name="Schauss S.J."/>
            <person name="Henry T."/>
            <person name="Palmatier R."/>
            <person name="Halvorson L."/>
            <person name="Dannenbring R."/>
            <person name="Beckmann J.D."/>
        </authorList>
    </citation>
    <scope>NUCLEOTIDE SEQUENCE [MRNA]</scope>
    <scope>PARTIAL PROTEIN SEQUENCE</scope>
    <scope>TISSUE SPECIFICITY</scope>
    <source>
        <tissue>Tracheobronchial</tissue>
    </source>
</reference>
<reference key="2">
    <citation type="journal article" date="1996" name="Gene">
        <title>Isolation and characterization of a bovine gene encoding phenol sulfotransferase.</title>
        <authorList>
            <person name="Henry T."/>
            <person name="Kliewer B."/>
            <person name="Palmatier R."/>
            <person name="Ulphani J.S."/>
            <person name="Beckmann J.D."/>
        </authorList>
    </citation>
    <scope>NUCLEOTIDE SEQUENCE [GENOMIC DNA]</scope>
</reference>
<reference key="3">
    <citation type="submission" date="2005-08" db="EMBL/GenBank/DDBJ databases">
        <authorList>
            <consortium name="NIH - Mammalian Gene Collection (MGC) project"/>
        </authorList>
    </citation>
    <scope>NUCLEOTIDE SEQUENCE [LARGE SCALE MRNA]</scope>
    <source>
        <strain>Crossbred X Angus</strain>
        <tissue>Ileum</tissue>
    </source>
</reference>
<reference key="4">
    <citation type="submission" date="1994-12" db="EMBL/GenBank/DDBJ databases">
        <authorList>
            <person name="Nonneman D.J."/>
            <person name="Shibuya H."/>
            <person name="Johnson G.S."/>
        </authorList>
    </citation>
    <scope>NUCLEOTIDE SEQUENCE [GENOMIC DNA] OF 24-57</scope>
</reference>
<feature type="chain" id="PRO_0000085125" description="Sulfotransferase 1A1">
    <location>
        <begin position="1"/>
        <end position="295"/>
    </location>
</feature>
<feature type="active site" description="Proton acceptor" evidence="1">
    <location>
        <position position="108"/>
    </location>
</feature>
<feature type="binding site" evidence="3">
    <location>
        <begin position="48"/>
        <end position="53"/>
    </location>
    <ligand>
        <name>3'-phosphoadenylyl sulfate</name>
        <dbReference type="ChEBI" id="CHEBI:58339"/>
    </ligand>
</feature>
<feature type="binding site" evidence="3">
    <location>
        <begin position="106"/>
        <end position="108"/>
    </location>
    <ligand>
        <name>substrate</name>
    </ligand>
</feature>
<feature type="binding site" evidence="3">
    <location>
        <position position="130"/>
    </location>
    <ligand>
        <name>3'-phosphoadenylyl sulfate</name>
        <dbReference type="ChEBI" id="CHEBI:58339"/>
    </ligand>
</feature>
<feature type="binding site" evidence="3">
    <location>
        <position position="138"/>
    </location>
    <ligand>
        <name>3'-phosphoadenylyl sulfate</name>
        <dbReference type="ChEBI" id="CHEBI:58339"/>
    </ligand>
</feature>
<feature type="binding site" evidence="3">
    <location>
        <position position="193"/>
    </location>
    <ligand>
        <name>3'-phosphoadenylyl sulfate</name>
        <dbReference type="ChEBI" id="CHEBI:58339"/>
    </ligand>
</feature>
<feature type="binding site" evidence="3">
    <location>
        <begin position="227"/>
        <end position="232"/>
    </location>
    <ligand>
        <name>3'-phosphoadenylyl sulfate</name>
        <dbReference type="ChEBI" id="CHEBI:58339"/>
    </ligand>
</feature>
<feature type="binding site" evidence="3">
    <location>
        <begin position="255"/>
        <end position="259"/>
    </location>
    <ligand>
        <name>3'-phosphoadenylyl sulfate</name>
        <dbReference type="ChEBI" id="CHEBI:58339"/>
    </ligand>
</feature>
<feature type="modified residue" description="Phosphoserine" evidence="2">
    <location>
        <position position="138"/>
    </location>
</feature>
<feature type="sequence conflict" description="In Ref. 3; AAI02275." evidence="6" ref="3">
    <original>P</original>
    <variation>S</variation>
    <location>
        <position position="200"/>
    </location>
</feature>
<feature type="sequence conflict" description="In Ref. 1; AAA85510 and 2; AAC48677." evidence="6" ref="1 2">
    <original>AGCKLRF</original>
    <variation>RAATPL</variation>
    <location>
        <begin position="285"/>
        <end position="291"/>
    </location>
</feature>